<keyword id="KW-0349">Heme</keyword>
<keyword id="KW-0408">Iron</keyword>
<keyword id="KW-0472">Membrane</keyword>
<keyword id="KW-0479">Metal-binding</keyword>
<keyword id="KW-0503">Monooxygenase</keyword>
<keyword id="KW-0560">Oxidoreductase</keyword>
<keyword id="KW-1185">Reference proteome</keyword>
<keyword id="KW-0812">Transmembrane</keyword>
<keyword id="KW-1133">Transmembrane helix</keyword>
<proteinExistence type="evidence at transcript level"/>
<feature type="chain" id="PRO_0000052075" description="Cytochrome P450 71A25">
    <location>
        <begin position="1"/>
        <end position="490"/>
    </location>
</feature>
<feature type="transmembrane region" description="Helical" evidence="2">
    <location>
        <begin position="1"/>
        <end position="21"/>
    </location>
</feature>
<feature type="binding site" description="axial binding residue" evidence="1">
    <location>
        <position position="431"/>
    </location>
    <ligand>
        <name>heme</name>
        <dbReference type="ChEBI" id="CHEBI:30413"/>
    </ligand>
    <ligandPart>
        <name>Fe</name>
        <dbReference type="ChEBI" id="CHEBI:18248"/>
    </ligandPart>
</feature>
<sequence length="490" mass="55784">MMMMIILLWSIIFMTILFLKKQLSGKKGKTPPSPPGLPLIGNLHQLGRHTHRSLCDLSRRYGPLMLLHLGRVPVLIVSSADMAQEILKTHDQAFANRPRSKLSQKLLYNNRDVASAPYGEYWRQMKSVCVIHLLSNKMVRSFRDVREEEITLMMAKIRKSSSLPFNVSKVLECLTNDVICRVALGRKYGGETDFKKLTDRLSELLGTFSIGSFVPWLAWVDWIRGWDAQLDKMGKDLDDFFEKVVQDHEDGDRRDGTDLIDALLRVKREKSPGFEIERVSIKAITLDVFVGGSDTSFTLLEWAMTELLRHPKSLNRLQEEVRTICKGKSRVSEDDIQGMKYLKAVIKEALRLHPPFPMMAPHESTEDVKLRDYHIPAGTQVMMNAWAIGREVATWGPDAEEFKPERHLDTSVDFRGQNFELLPFGAGRRICPAVSFAVVLNEVVLANLVHGFDWKLPEESKEDKTDVAESSGFSVHREFPLYAVASPYLT</sequence>
<evidence type="ECO:0000250" key="1"/>
<evidence type="ECO:0000255" key="2"/>
<evidence type="ECO:0000305" key="3"/>
<accession>Q9STK8</accession>
<dbReference type="EC" id="1.14.-.-"/>
<dbReference type="EMBL" id="AL049659">
    <property type="protein sequence ID" value="CAB41170.1"/>
    <property type="molecule type" value="Genomic_DNA"/>
</dbReference>
<dbReference type="EMBL" id="CP002686">
    <property type="protein sequence ID" value="AEE78394.1"/>
    <property type="molecule type" value="Genomic_DNA"/>
</dbReference>
<dbReference type="PIR" id="T06714">
    <property type="entry name" value="T06714"/>
</dbReference>
<dbReference type="RefSeq" id="NP_680107.1">
    <property type="nucleotide sequence ID" value="NM_148854.3"/>
</dbReference>
<dbReference type="SMR" id="Q9STK8"/>
<dbReference type="FunCoup" id="Q9STK8">
    <property type="interactions" value="308"/>
</dbReference>
<dbReference type="STRING" id="3702.Q9STK8"/>
<dbReference type="PaxDb" id="3702-AT3G48280.1"/>
<dbReference type="ProteomicsDB" id="240490"/>
<dbReference type="EnsemblPlants" id="AT3G48280.1">
    <property type="protein sequence ID" value="AT3G48280.1"/>
    <property type="gene ID" value="AT3G48280"/>
</dbReference>
<dbReference type="GeneID" id="823986"/>
<dbReference type="Gramene" id="AT3G48280.1">
    <property type="protein sequence ID" value="AT3G48280.1"/>
    <property type="gene ID" value="AT3G48280"/>
</dbReference>
<dbReference type="KEGG" id="ath:AT3G48280"/>
<dbReference type="Araport" id="AT3G48280"/>
<dbReference type="TAIR" id="AT3G48280">
    <property type="gene designation" value="CYP71A25"/>
</dbReference>
<dbReference type="eggNOG" id="KOG0156">
    <property type="taxonomic scope" value="Eukaryota"/>
</dbReference>
<dbReference type="HOGENOM" id="CLU_001570_4_1_1"/>
<dbReference type="InParanoid" id="Q9STK8"/>
<dbReference type="OMA" id="GRHTHRS"/>
<dbReference type="OrthoDB" id="1470350at2759"/>
<dbReference type="PhylomeDB" id="Q9STK8"/>
<dbReference type="BioCyc" id="ARA:AT3G48280-MONOMER"/>
<dbReference type="PRO" id="PR:Q9STK8"/>
<dbReference type="Proteomes" id="UP000006548">
    <property type="component" value="Chromosome 3"/>
</dbReference>
<dbReference type="ExpressionAtlas" id="Q9STK8">
    <property type="expression patterns" value="baseline and differential"/>
</dbReference>
<dbReference type="GO" id="GO:0005794">
    <property type="term" value="C:Golgi apparatus"/>
    <property type="evidence" value="ECO:0007005"/>
    <property type="project" value="TAIR"/>
</dbReference>
<dbReference type="GO" id="GO:0000137">
    <property type="term" value="C:Golgi cis cisterna"/>
    <property type="evidence" value="ECO:0007005"/>
    <property type="project" value="TAIR"/>
</dbReference>
<dbReference type="GO" id="GO:0016020">
    <property type="term" value="C:membrane"/>
    <property type="evidence" value="ECO:0007669"/>
    <property type="project" value="UniProtKB-SubCell"/>
</dbReference>
<dbReference type="GO" id="GO:0020037">
    <property type="term" value="F:heme binding"/>
    <property type="evidence" value="ECO:0007669"/>
    <property type="project" value="InterPro"/>
</dbReference>
<dbReference type="GO" id="GO:0005506">
    <property type="term" value="F:iron ion binding"/>
    <property type="evidence" value="ECO:0007669"/>
    <property type="project" value="InterPro"/>
</dbReference>
<dbReference type="GO" id="GO:0004497">
    <property type="term" value="F:monooxygenase activity"/>
    <property type="evidence" value="ECO:0007669"/>
    <property type="project" value="UniProtKB-KW"/>
</dbReference>
<dbReference type="GO" id="GO:0016705">
    <property type="term" value="F:oxidoreductase activity, acting on paired donors, with incorporation or reduction of molecular oxygen"/>
    <property type="evidence" value="ECO:0007669"/>
    <property type="project" value="InterPro"/>
</dbReference>
<dbReference type="CDD" id="cd11072">
    <property type="entry name" value="CYP71-like"/>
    <property type="match status" value="1"/>
</dbReference>
<dbReference type="FunFam" id="1.10.630.10:FF:000011">
    <property type="entry name" value="Cytochrome P450 83B1"/>
    <property type="match status" value="1"/>
</dbReference>
<dbReference type="Gene3D" id="1.10.630.10">
    <property type="entry name" value="Cytochrome P450"/>
    <property type="match status" value="1"/>
</dbReference>
<dbReference type="InterPro" id="IPR001128">
    <property type="entry name" value="Cyt_P450"/>
</dbReference>
<dbReference type="InterPro" id="IPR017972">
    <property type="entry name" value="Cyt_P450_CS"/>
</dbReference>
<dbReference type="InterPro" id="IPR002401">
    <property type="entry name" value="Cyt_P450_E_grp-I"/>
</dbReference>
<dbReference type="InterPro" id="IPR036396">
    <property type="entry name" value="Cyt_P450_sf"/>
</dbReference>
<dbReference type="PANTHER" id="PTHR47955:SF15">
    <property type="entry name" value="CYTOCHROME P450 71A2-LIKE"/>
    <property type="match status" value="1"/>
</dbReference>
<dbReference type="PANTHER" id="PTHR47955">
    <property type="entry name" value="CYTOCHROME P450 FAMILY 71 PROTEIN"/>
    <property type="match status" value="1"/>
</dbReference>
<dbReference type="Pfam" id="PF00067">
    <property type="entry name" value="p450"/>
    <property type="match status" value="1"/>
</dbReference>
<dbReference type="PRINTS" id="PR00463">
    <property type="entry name" value="EP450I"/>
</dbReference>
<dbReference type="PRINTS" id="PR00385">
    <property type="entry name" value="P450"/>
</dbReference>
<dbReference type="SUPFAM" id="SSF48264">
    <property type="entry name" value="Cytochrome P450"/>
    <property type="match status" value="1"/>
</dbReference>
<dbReference type="PROSITE" id="PS00086">
    <property type="entry name" value="CYTOCHROME_P450"/>
    <property type="match status" value="1"/>
</dbReference>
<name>C71AP_ARATH</name>
<gene>
    <name type="primary">CYP71A25</name>
    <name type="ordered locus">At3g48280</name>
    <name type="ORF">T29H11.200</name>
</gene>
<reference key="1">
    <citation type="journal article" date="2000" name="Nature">
        <title>Sequence and analysis of chromosome 3 of the plant Arabidopsis thaliana.</title>
        <authorList>
            <person name="Salanoubat M."/>
            <person name="Lemcke K."/>
            <person name="Rieger M."/>
            <person name="Ansorge W."/>
            <person name="Unseld M."/>
            <person name="Fartmann B."/>
            <person name="Valle G."/>
            <person name="Bloecker H."/>
            <person name="Perez-Alonso M."/>
            <person name="Obermaier B."/>
            <person name="Delseny M."/>
            <person name="Boutry M."/>
            <person name="Grivell L.A."/>
            <person name="Mache R."/>
            <person name="Puigdomenech P."/>
            <person name="De Simone V."/>
            <person name="Choisne N."/>
            <person name="Artiguenave F."/>
            <person name="Robert C."/>
            <person name="Brottier P."/>
            <person name="Wincker P."/>
            <person name="Cattolico L."/>
            <person name="Weissenbach J."/>
            <person name="Saurin W."/>
            <person name="Quetier F."/>
            <person name="Schaefer M."/>
            <person name="Mueller-Auer S."/>
            <person name="Gabel C."/>
            <person name="Fuchs M."/>
            <person name="Benes V."/>
            <person name="Wurmbach E."/>
            <person name="Drzonek H."/>
            <person name="Erfle H."/>
            <person name="Jordan N."/>
            <person name="Bangert S."/>
            <person name="Wiedelmann R."/>
            <person name="Kranz H."/>
            <person name="Voss H."/>
            <person name="Holland R."/>
            <person name="Brandt P."/>
            <person name="Nyakatura G."/>
            <person name="Vezzi A."/>
            <person name="D'Angelo M."/>
            <person name="Pallavicini A."/>
            <person name="Toppo S."/>
            <person name="Simionati B."/>
            <person name="Conrad A."/>
            <person name="Hornischer K."/>
            <person name="Kauer G."/>
            <person name="Loehnert T.-H."/>
            <person name="Nordsiek G."/>
            <person name="Reichelt J."/>
            <person name="Scharfe M."/>
            <person name="Schoen O."/>
            <person name="Bargues M."/>
            <person name="Terol J."/>
            <person name="Climent J."/>
            <person name="Navarro P."/>
            <person name="Collado C."/>
            <person name="Perez-Perez A."/>
            <person name="Ottenwaelder B."/>
            <person name="Duchemin D."/>
            <person name="Cooke R."/>
            <person name="Laudie M."/>
            <person name="Berger-Llauro C."/>
            <person name="Purnelle B."/>
            <person name="Masuy D."/>
            <person name="de Haan M."/>
            <person name="Maarse A.C."/>
            <person name="Alcaraz J.-P."/>
            <person name="Cottet A."/>
            <person name="Casacuberta E."/>
            <person name="Monfort A."/>
            <person name="Argiriou A."/>
            <person name="Flores M."/>
            <person name="Liguori R."/>
            <person name="Vitale D."/>
            <person name="Mannhaupt G."/>
            <person name="Haase D."/>
            <person name="Schoof H."/>
            <person name="Rudd S."/>
            <person name="Zaccaria P."/>
            <person name="Mewes H.-W."/>
            <person name="Mayer K.F.X."/>
            <person name="Kaul S."/>
            <person name="Town C.D."/>
            <person name="Koo H.L."/>
            <person name="Tallon L.J."/>
            <person name="Jenkins J."/>
            <person name="Rooney T."/>
            <person name="Rizzo M."/>
            <person name="Walts A."/>
            <person name="Utterback T."/>
            <person name="Fujii C.Y."/>
            <person name="Shea T.P."/>
            <person name="Creasy T.H."/>
            <person name="Haas B."/>
            <person name="Maiti R."/>
            <person name="Wu D."/>
            <person name="Peterson J."/>
            <person name="Van Aken S."/>
            <person name="Pai G."/>
            <person name="Militscher J."/>
            <person name="Sellers P."/>
            <person name="Gill J.E."/>
            <person name="Feldblyum T.V."/>
            <person name="Preuss D."/>
            <person name="Lin X."/>
            <person name="Nierman W.C."/>
            <person name="Salzberg S.L."/>
            <person name="White O."/>
            <person name="Venter J.C."/>
            <person name="Fraser C.M."/>
            <person name="Kaneko T."/>
            <person name="Nakamura Y."/>
            <person name="Sato S."/>
            <person name="Kato T."/>
            <person name="Asamizu E."/>
            <person name="Sasamoto S."/>
            <person name="Kimura T."/>
            <person name="Idesawa K."/>
            <person name="Kawashima K."/>
            <person name="Kishida Y."/>
            <person name="Kiyokawa C."/>
            <person name="Kohara M."/>
            <person name="Matsumoto M."/>
            <person name="Matsuno A."/>
            <person name="Muraki A."/>
            <person name="Nakayama S."/>
            <person name="Nakazaki N."/>
            <person name="Shinpo S."/>
            <person name="Takeuchi C."/>
            <person name="Wada T."/>
            <person name="Watanabe A."/>
            <person name="Yamada M."/>
            <person name="Yasuda M."/>
            <person name="Tabata S."/>
        </authorList>
    </citation>
    <scope>NUCLEOTIDE SEQUENCE [LARGE SCALE GENOMIC DNA]</scope>
    <source>
        <strain>cv. Columbia</strain>
    </source>
</reference>
<reference key="2">
    <citation type="journal article" date="2017" name="Plant J.">
        <title>Araport11: a complete reannotation of the Arabidopsis thaliana reference genome.</title>
        <authorList>
            <person name="Cheng C.Y."/>
            <person name="Krishnakumar V."/>
            <person name="Chan A.P."/>
            <person name="Thibaud-Nissen F."/>
            <person name="Schobel S."/>
            <person name="Town C.D."/>
        </authorList>
    </citation>
    <scope>GENOME REANNOTATION</scope>
    <source>
        <strain>cv. Columbia</strain>
    </source>
</reference>
<protein>
    <recommendedName>
        <fullName>Cytochrome P450 71A25</fullName>
        <ecNumber>1.14.-.-</ecNumber>
    </recommendedName>
</protein>
<comment type="cofactor">
    <cofactor evidence="1">
        <name>heme</name>
        <dbReference type="ChEBI" id="CHEBI:30413"/>
    </cofactor>
</comment>
<comment type="subcellular location">
    <subcellularLocation>
        <location evidence="3">Membrane</location>
        <topology evidence="3">Single-pass membrane protein</topology>
    </subcellularLocation>
</comment>
<comment type="similarity">
    <text evidence="3">Belongs to the cytochrome P450 family.</text>
</comment>
<organism>
    <name type="scientific">Arabidopsis thaliana</name>
    <name type="common">Mouse-ear cress</name>
    <dbReference type="NCBI Taxonomy" id="3702"/>
    <lineage>
        <taxon>Eukaryota</taxon>
        <taxon>Viridiplantae</taxon>
        <taxon>Streptophyta</taxon>
        <taxon>Embryophyta</taxon>
        <taxon>Tracheophyta</taxon>
        <taxon>Spermatophyta</taxon>
        <taxon>Magnoliopsida</taxon>
        <taxon>eudicotyledons</taxon>
        <taxon>Gunneridae</taxon>
        <taxon>Pentapetalae</taxon>
        <taxon>rosids</taxon>
        <taxon>malvids</taxon>
        <taxon>Brassicales</taxon>
        <taxon>Brassicaceae</taxon>
        <taxon>Camelineae</taxon>
        <taxon>Arabidopsis</taxon>
    </lineage>
</organism>